<name>LSDA_DROME</name>
<keyword id="KW-0156">Chromatin regulator</keyword>
<keyword id="KW-0158">Chromosome</keyword>
<keyword id="KW-0175">Coiled coil</keyword>
<keyword id="KW-0274">FAD</keyword>
<keyword id="KW-0285">Flavoprotein</keyword>
<keyword id="KW-0539">Nucleus</keyword>
<keyword id="KW-0560">Oxidoreductase</keyword>
<keyword id="KW-0597">Phosphoprotein</keyword>
<keyword id="KW-1185">Reference proteome</keyword>
<keyword id="KW-0678">Repressor</keyword>
<keyword id="KW-0804">Transcription</keyword>
<keyword id="KW-0805">Transcription regulation</keyword>
<protein>
    <recommendedName>
        <fullName>Possible lysine-specific histone demethylase 1</fullName>
        <ecNumber>1.-.-.-</ecNumber>
    </recommendedName>
</protein>
<gene>
    <name type="primary">Su(var)3-3</name>
    <name type="synonym">Hdm</name>
    <name type="synonym">LSD1</name>
    <name type="ORF">CG17149</name>
</gene>
<dbReference type="EC" id="1.-.-.-"/>
<dbReference type="EMBL" id="AE014296">
    <property type="protein sequence ID" value="AAF49052.1"/>
    <property type="molecule type" value="Genomic_DNA"/>
</dbReference>
<dbReference type="EMBL" id="AY094837">
    <property type="protein sequence ID" value="AAM11190.1"/>
    <property type="molecule type" value="mRNA"/>
</dbReference>
<dbReference type="RefSeq" id="NP_649194.1">
    <property type="nucleotide sequence ID" value="NM_140937.3"/>
</dbReference>
<dbReference type="RefSeq" id="NP_730497.1">
    <property type="nucleotide sequence ID" value="NM_168835.2"/>
</dbReference>
<dbReference type="SMR" id="Q9VW97"/>
<dbReference type="BioGRID" id="65482">
    <property type="interactions" value="19"/>
</dbReference>
<dbReference type="FunCoup" id="Q9VW97">
    <property type="interactions" value="2079"/>
</dbReference>
<dbReference type="IntAct" id="Q9VW97">
    <property type="interactions" value="4"/>
</dbReference>
<dbReference type="STRING" id="7227.FBpp0074594"/>
<dbReference type="iPTMnet" id="Q9VW97"/>
<dbReference type="PaxDb" id="7227-FBpp0074594"/>
<dbReference type="EnsemblMetazoa" id="FBtr0074825">
    <property type="protein sequence ID" value="FBpp0074594"/>
    <property type="gene ID" value="FBgn0260397"/>
</dbReference>
<dbReference type="EnsemblMetazoa" id="FBtr0074826">
    <property type="protein sequence ID" value="FBpp0074595"/>
    <property type="gene ID" value="FBgn0260397"/>
</dbReference>
<dbReference type="GeneID" id="40217"/>
<dbReference type="KEGG" id="dme:Dmel_CG17149"/>
<dbReference type="AGR" id="FB:FBgn0260397"/>
<dbReference type="CTD" id="40217"/>
<dbReference type="FlyBase" id="FBgn0260397">
    <property type="gene designation" value="Su(var)3-3"/>
</dbReference>
<dbReference type="VEuPathDB" id="VectorBase:FBgn0260397"/>
<dbReference type="eggNOG" id="KOG0029">
    <property type="taxonomic scope" value="Eukaryota"/>
</dbReference>
<dbReference type="GeneTree" id="ENSGT00940000157193"/>
<dbReference type="HOGENOM" id="CLU_004498_5_1_1"/>
<dbReference type="InParanoid" id="Q9VW97"/>
<dbReference type="OMA" id="SSRGEMF"/>
<dbReference type="OrthoDB" id="9982100at2759"/>
<dbReference type="PhylomeDB" id="Q9VW97"/>
<dbReference type="Reactome" id="R-DME-3214815">
    <property type="pathway name" value="HDACs deacetylate histones"/>
</dbReference>
<dbReference type="Reactome" id="R-DME-5625886">
    <property type="pathway name" value="Activated PKN1 stimulates transcription of AR (androgen receptor) regulated genes KLK2 and KLK3"/>
</dbReference>
<dbReference type="Reactome" id="R-DME-9018519">
    <property type="pathway name" value="Estrogen-dependent gene expression"/>
</dbReference>
<dbReference type="Reactome" id="R-DME-983231">
    <property type="pathway name" value="Factors involved in megakaryocyte development and platelet production"/>
</dbReference>
<dbReference type="SignaLink" id="Q9VW97"/>
<dbReference type="BioGRID-ORCS" id="40217">
    <property type="hits" value="0 hits in 3 CRISPR screens"/>
</dbReference>
<dbReference type="GenomeRNAi" id="40217"/>
<dbReference type="PRO" id="PR:Q9VW97"/>
<dbReference type="Proteomes" id="UP000000803">
    <property type="component" value="Chromosome 3L"/>
</dbReference>
<dbReference type="Bgee" id="FBgn0260397">
    <property type="expression patterns" value="Expressed in mechanosensory neuron of leg chordotonal organ in insect leg and 108 other cell types or tissues"/>
</dbReference>
<dbReference type="ExpressionAtlas" id="Q9VW97">
    <property type="expression patterns" value="baseline and differential"/>
</dbReference>
<dbReference type="GO" id="GO:0000785">
    <property type="term" value="C:chromatin"/>
    <property type="evidence" value="ECO:0000318"/>
    <property type="project" value="GO_Central"/>
</dbReference>
<dbReference type="GO" id="GO:0005634">
    <property type="term" value="C:nucleus"/>
    <property type="evidence" value="ECO:0000314"/>
    <property type="project" value="UniProtKB"/>
</dbReference>
<dbReference type="GO" id="GO:0017053">
    <property type="term" value="C:transcription repressor complex"/>
    <property type="evidence" value="ECO:0000353"/>
    <property type="project" value="FlyBase"/>
</dbReference>
<dbReference type="GO" id="GO:0003682">
    <property type="term" value="F:chromatin binding"/>
    <property type="evidence" value="ECO:0000318"/>
    <property type="project" value="GO_Central"/>
</dbReference>
<dbReference type="GO" id="GO:0140682">
    <property type="term" value="F:FAD-dependent H3K4me/H3K4me3 demethylase activity"/>
    <property type="evidence" value="ECO:0000315"/>
    <property type="project" value="FlyBase"/>
</dbReference>
<dbReference type="GO" id="GO:0050660">
    <property type="term" value="F:flavin adenine dinucleotide binding"/>
    <property type="evidence" value="ECO:0000318"/>
    <property type="project" value="GO_Central"/>
</dbReference>
<dbReference type="GO" id="GO:0032453">
    <property type="term" value="F:histone H3K4 demethylase activity"/>
    <property type="evidence" value="ECO:0000314"/>
    <property type="project" value="UniProtKB"/>
</dbReference>
<dbReference type="GO" id="GO:0106222">
    <property type="term" value="F:lncRNA binding"/>
    <property type="evidence" value="ECO:0000353"/>
    <property type="project" value="FlyBase"/>
</dbReference>
<dbReference type="GO" id="GO:0006325">
    <property type="term" value="P:chromatin organization"/>
    <property type="evidence" value="ECO:0000315"/>
    <property type="project" value="FlyBase"/>
</dbReference>
<dbReference type="GO" id="GO:0040029">
    <property type="term" value="P:epigenetic regulation of gene expression"/>
    <property type="evidence" value="ECO:0000318"/>
    <property type="project" value="GO_Central"/>
</dbReference>
<dbReference type="GO" id="GO:0033696">
    <property type="term" value="P:heterochromatin boundary formation"/>
    <property type="evidence" value="ECO:0000316"/>
    <property type="project" value="FlyBase"/>
</dbReference>
<dbReference type="GO" id="GO:0070828">
    <property type="term" value="P:heterochromatin organization"/>
    <property type="evidence" value="ECO:0000315"/>
    <property type="project" value="FlyBase"/>
</dbReference>
<dbReference type="GO" id="GO:0007474">
    <property type="term" value="P:imaginal disc-derived wing vein specification"/>
    <property type="evidence" value="ECO:0000315"/>
    <property type="project" value="FlyBase"/>
</dbReference>
<dbReference type="GO" id="GO:0048477">
    <property type="term" value="P:oogenesis"/>
    <property type="evidence" value="ECO:0000315"/>
    <property type="project" value="FlyBase"/>
</dbReference>
<dbReference type="GO" id="GO:0008284">
    <property type="term" value="P:positive regulation of cell population proliferation"/>
    <property type="evidence" value="ECO:0000315"/>
    <property type="project" value="FlyBase"/>
</dbReference>
<dbReference type="GO" id="GO:0006355">
    <property type="term" value="P:regulation of DNA-templated transcription"/>
    <property type="evidence" value="ECO:0007669"/>
    <property type="project" value="InterPro"/>
</dbReference>
<dbReference type="GO" id="GO:0141006">
    <property type="term" value="P:transposable element silencing by piRNA-mediated heterochromatin formation"/>
    <property type="evidence" value="ECO:0000315"/>
    <property type="project" value="FlyBase"/>
</dbReference>
<dbReference type="FunFam" id="3.50.50.60:FF:000029">
    <property type="entry name" value="Lysine-specific histone demethylase"/>
    <property type="match status" value="1"/>
</dbReference>
<dbReference type="FunFam" id="3.90.660.10:FF:000001">
    <property type="entry name" value="Lysine-specific histone demethylase"/>
    <property type="match status" value="1"/>
</dbReference>
<dbReference type="FunFam" id="1.10.10.10:FF:000064">
    <property type="entry name" value="Lysine-specific histone demethylase 1A"/>
    <property type="match status" value="1"/>
</dbReference>
<dbReference type="FunFam" id="1.10.287.80:FF:000002">
    <property type="entry name" value="Lysine-specific histone demethylase 1A"/>
    <property type="match status" value="1"/>
</dbReference>
<dbReference type="FunFam" id="3.50.50.60:FF:000289">
    <property type="entry name" value="Probable lysine-specific histone demethylase 1"/>
    <property type="match status" value="1"/>
</dbReference>
<dbReference type="Gene3D" id="3.90.660.10">
    <property type="match status" value="1"/>
</dbReference>
<dbReference type="Gene3D" id="1.10.287.80">
    <property type="entry name" value="ATP synthase, gamma subunit, helix hairpin domain"/>
    <property type="match status" value="1"/>
</dbReference>
<dbReference type="Gene3D" id="3.50.50.60">
    <property type="entry name" value="FAD/NAD(P)-binding domain"/>
    <property type="match status" value="2"/>
</dbReference>
<dbReference type="Gene3D" id="1.10.10.10">
    <property type="entry name" value="Winged helix-like DNA-binding domain superfamily/Winged helix DNA-binding domain"/>
    <property type="match status" value="1"/>
</dbReference>
<dbReference type="InterPro" id="IPR002937">
    <property type="entry name" value="Amino_oxidase"/>
</dbReference>
<dbReference type="InterPro" id="IPR036188">
    <property type="entry name" value="FAD/NAD-bd_sf"/>
</dbReference>
<dbReference type="InterPro" id="IPR050281">
    <property type="entry name" value="Flavin_monoamine_oxidase"/>
</dbReference>
<dbReference type="InterPro" id="IPR017366">
    <property type="entry name" value="Hist_Lys-spec_deMease"/>
</dbReference>
<dbReference type="InterPro" id="IPR009057">
    <property type="entry name" value="Homeodomain-like_sf"/>
</dbReference>
<dbReference type="InterPro" id="IPR007526">
    <property type="entry name" value="SWIRM"/>
</dbReference>
<dbReference type="InterPro" id="IPR036388">
    <property type="entry name" value="WH-like_DNA-bd_sf"/>
</dbReference>
<dbReference type="PANTHER" id="PTHR10742">
    <property type="entry name" value="FLAVIN MONOAMINE OXIDASE"/>
    <property type="match status" value="1"/>
</dbReference>
<dbReference type="PANTHER" id="PTHR10742:SF386">
    <property type="entry name" value="LYSINE-SPECIFIC HISTONE DEMETHYLASE 1A"/>
    <property type="match status" value="1"/>
</dbReference>
<dbReference type="Pfam" id="PF01593">
    <property type="entry name" value="Amino_oxidase"/>
    <property type="match status" value="1"/>
</dbReference>
<dbReference type="Pfam" id="PF04433">
    <property type="entry name" value="SWIRM"/>
    <property type="match status" value="1"/>
</dbReference>
<dbReference type="PIRSF" id="PIRSF038051">
    <property type="entry name" value="Histone_Lys-demethylase"/>
    <property type="match status" value="1"/>
</dbReference>
<dbReference type="SUPFAM" id="SSF54373">
    <property type="entry name" value="FAD-linked reductases, C-terminal domain"/>
    <property type="match status" value="1"/>
</dbReference>
<dbReference type="SUPFAM" id="SSF51905">
    <property type="entry name" value="FAD/NAD(P)-binding domain"/>
    <property type="match status" value="1"/>
</dbReference>
<dbReference type="SUPFAM" id="SSF46689">
    <property type="entry name" value="Homeodomain-like"/>
    <property type="match status" value="1"/>
</dbReference>
<dbReference type="PROSITE" id="PS50934">
    <property type="entry name" value="SWIRM"/>
    <property type="match status" value="1"/>
</dbReference>
<accession>Q9VW97</accession>
<accession>Q0E8C9</accession>
<sequence length="890" mass="98389">MKPTQFGGSSSKMTEPIEYVTLISDDSDGEPTPKRNVNHPPSALSAPNPGQKQKHPDEDSNDAPATSDERRTSRRNRPKVDYSNRPSGSGDTASNDKSGSASMGPNNQQAERRSQSQTRKSEANATSSSVSGPSAGNSRPSQNGDSKDRDAGTPTVLSGQEGAVFQSRLPFNKMTPNEEACFPDISRSGILGHRVFLNIRNSLLHMWVDNPKIQLSFEIALKNLPPPFDSEPSLVRRVHSFLERHGFINFGIFKRLKPIPAKKLGKVIVIGAGISGLAVAHQLQQFGMDVIVLEARDRVGGRISTFRKNSYIADVGAMVVTGVYGNPMTILSKQIGMDLVPIQQTCPLYGPDGKPVPKEKDDVIEREFNRLLESASYLSHRLDFNYAGDCPVSLGDALEWIISMQEMQVMHKRGQHMQEIIATQTKIIEQRRRLKTLRDTIGKLKNEHLAMINQRKPKGTDGDLKYCYQEFNIRNTQIKMEETISTFHDLHAEEKQMLAKLHELEQNRPSDVYLSSRDRLILDWHFANLEFANATRLNNLSLKHWDQDDDFEFIGHHTTVRNGYSCVPVALTENLDIRVNSAVKEIKYGTKGVEVVAENLKTSNSQMTYKADLVVCTLTLGVLKVAVAHKESQQSNTVKFDPPLPDWKQQAIKRLGFGNLNKVVLCFDRIFWDPNANLFGHVGSTTASRGEMFLFWSISSSPVLLALVAGMAANLVESVTDDIIIGRCMSVLKNIFGNTSVPQPKETVVTRWRSDPWARGSYSYVSVGSSGSDYDLLAAPVIPPSSKDAEGLPRLFFAGEHTIRNYPATVHGAYLSGLREAGRIADYYLGYPEGTPPDIGYSVAEAANLVSVGNVVKLRDLSPNLSDSSPSSKKSEENSNSNTADSTELQ</sequence>
<evidence type="ECO:0000250" key="1"/>
<evidence type="ECO:0000255" key="2"/>
<evidence type="ECO:0000255" key="3">
    <source>
        <dbReference type="PROSITE-ProRule" id="PRU00247"/>
    </source>
</evidence>
<evidence type="ECO:0000256" key="4">
    <source>
        <dbReference type="SAM" id="MobiDB-lite"/>
    </source>
</evidence>
<evidence type="ECO:0000269" key="5">
    <source>
    </source>
</evidence>
<evidence type="ECO:0000269" key="6">
    <source>
    </source>
</evidence>
<evidence type="ECO:0000269" key="7">
    <source>
    </source>
</evidence>
<evidence type="ECO:0000305" key="8"/>
<reference key="1">
    <citation type="journal article" date="2000" name="Science">
        <title>The genome sequence of Drosophila melanogaster.</title>
        <authorList>
            <person name="Adams M.D."/>
            <person name="Celniker S.E."/>
            <person name="Holt R.A."/>
            <person name="Evans C.A."/>
            <person name="Gocayne J.D."/>
            <person name="Amanatides P.G."/>
            <person name="Scherer S.E."/>
            <person name="Li P.W."/>
            <person name="Hoskins R.A."/>
            <person name="Galle R.F."/>
            <person name="George R.A."/>
            <person name="Lewis S.E."/>
            <person name="Richards S."/>
            <person name="Ashburner M."/>
            <person name="Henderson S.N."/>
            <person name="Sutton G.G."/>
            <person name="Wortman J.R."/>
            <person name="Yandell M.D."/>
            <person name="Zhang Q."/>
            <person name="Chen L.X."/>
            <person name="Brandon R.C."/>
            <person name="Rogers Y.-H.C."/>
            <person name="Blazej R.G."/>
            <person name="Champe M."/>
            <person name="Pfeiffer B.D."/>
            <person name="Wan K.H."/>
            <person name="Doyle C."/>
            <person name="Baxter E.G."/>
            <person name="Helt G."/>
            <person name="Nelson C.R."/>
            <person name="Miklos G.L.G."/>
            <person name="Abril J.F."/>
            <person name="Agbayani A."/>
            <person name="An H.-J."/>
            <person name="Andrews-Pfannkoch C."/>
            <person name="Baldwin D."/>
            <person name="Ballew R.M."/>
            <person name="Basu A."/>
            <person name="Baxendale J."/>
            <person name="Bayraktaroglu L."/>
            <person name="Beasley E.M."/>
            <person name="Beeson K.Y."/>
            <person name="Benos P.V."/>
            <person name="Berman B.P."/>
            <person name="Bhandari D."/>
            <person name="Bolshakov S."/>
            <person name="Borkova D."/>
            <person name="Botchan M.R."/>
            <person name="Bouck J."/>
            <person name="Brokstein P."/>
            <person name="Brottier P."/>
            <person name="Burtis K.C."/>
            <person name="Busam D.A."/>
            <person name="Butler H."/>
            <person name="Cadieu E."/>
            <person name="Center A."/>
            <person name="Chandra I."/>
            <person name="Cherry J.M."/>
            <person name="Cawley S."/>
            <person name="Dahlke C."/>
            <person name="Davenport L.B."/>
            <person name="Davies P."/>
            <person name="de Pablos B."/>
            <person name="Delcher A."/>
            <person name="Deng Z."/>
            <person name="Mays A.D."/>
            <person name="Dew I."/>
            <person name="Dietz S.M."/>
            <person name="Dodson K."/>
            <person name="Doup L.E."/>
            <person name="Downes M."/>
            <person name="Dugan-Rocha S."/>
            <person name="Dunkov B.C."/>
            <person name="Dunn P."/>
            <person name="Durbin K.J."/>
            <person name="Evangelista C.C."/>
            <person name="Ferraz C."/>
            <person name="Ferriera S."/>
            <person name="Fleischmann W."/>
            <person name="Fosler C."/>
            <person name="Gabrielian A.E."/>
            <person name="Garg N.S."/>
            <person name="Gelbart W.M."/>
            <person name="Glasser K."/>
            <person name="Glodek A."/>
            <person name="Gong F."/>
            <person name="Gorrell J.H."/>
            <person name="Gu Z."/>
            <person name="Guan P."/>
            <person name="Harris M."/>
            <person name="Harris N.L."/>
            <person name="Harvey D.A."/>
            <person name="Heiman T.J."/>
            <person name="Hernandez J.R."/>
            <person name="Houck J."/>
            <person name="Hostin D."/>
            <person name="Houston K.A."/>
            <person name="Howland T.J."/>
            <person name="Wei M.-H."/>
            <person name="Ibegwam C."/>
            <person name="Jalali M."/>
            <person name="Kalush F."/>
            <person name="Karpen G.H."/>
            <person name="Ke Z."/>
            <person name="Kennison J.A."/>
            <person name="Ketchum K.A."/>
            <person name="Kimmel B.E."/>
            <person name="Kodira C.D."/>
            <person name="Kraft C.L."/>
            <person name="Kravitz S."/>
            <person name="Kulp D."/>
            <person name="Lai Z."/>
            <person name="Lasko P."/>
            <person name="Lei Y."/>
            <person name="Levitsky A.A."/>
            <person name="Li J.H."/>
            <person name="Li Z."/>
            <person name="Liang Y."/>
            <person name="Lin X."/>
            <person name="Liu X."/>
            <person name="Mattei B."/>
            <person name="McIntosh T.C."/>
            <person name="McLeod M.P."/>
            <person name="McPherson D."/>
            <person name="Merkulov G."/>
            <person name="Milshina N.V."/>
            <person name="Mobarry C."/>
            <person name="Morris J."/>
            <person name="Moshrefi A."/>
            <person name="Mount S.M."/>
            <person name="Moy M."/>
            <person name="Murphy B."/>
            <person name="Murphy L."/>
            <person name="Muzny D.M."/>
            <person name="Nelson D.L."/>
            <person name="Nelson D.R."/>
            <person name="Nelson K.A."/>
            <person name="Nixon K."/>
            <person name="Nusskern D.R."/>
            <person name="Pacleb J.M."/>
            <person name="Palazzolo M."/>
            <person name="Pittman G.S."/>
            <person name="Pan S."/>
            <person name="Pollard J."/>
            <person name="Puri V."/>
            <person name="Reese M.G."/>
            <person name="Reinert K."/>
            <person name="Remington K."/>
            <person name="Saunders R.D.C."/>
            <person name="Scheeler F."/>
            <person name="Shen H."/>
            <person name="Shue B.C."/>
            <person name="Siden-Kiamos I."/>
            <person name="Simpson M."/>
            <person name="Skupski M.P."/>
            <person name="Smith T.J."/>
            <person name="Spier E."/>
            <person name="Spradling A.C."/>
            <person name="Stapleton M."/>
            <person name="Strong R."/>
            <person name="Sun E."/>
            <person name="Svirskas R."/>
            <person name="Tector C."/>
            <person name="Turner R."/>
            <person name="Venter E."/>
            <person name="Wang A.H."/>
            <person name="Wang X."/>
            <person name="Wang Z.-Y."/>
            <person name="Wassarman D.A."/>
            <person name="Weinstock G.M."/>
            <person name="Weissenbach J."/>
            <person name="Williams S.M."/>
            <person name="Woodage T."/>
            <person name="Worley K.C."/>
            <person name="Wu D."/>
            <person name="Yang S."/>
            <person name="Yao Q.A."/>
            <person name="Ye J."/>
            <person name="Yeh R.-F."/>
            <person name="Zaveri J.S."/>
            <person name="Zhan M."/>
            <person name="Zhang G."/>
            <person name="Zhao Q."/>
            <person name="Zheng L."/>
            <person name="Zheng X.H."/>
            <person name="Zhong F.N."/>
            <person name="Zhong W."/>
            <person name="Zhou X."/>
            <person name="Zhu S.C."/>
            <person name="Zhu X."/>
            <person name="Smith H.O."/>
            <person name="Gibbs R.A."/>
            <person name="Myers E.W."/>
            <person name="Rubin G.M."/>
            <person name="Venter J.C."/>
        </authorList>
    </citation>
    <scope>NUCLEOTIDE SEQUENCE [LARGE SCALE GENOMIC DNA]</scope>
    <source>
        <strain>Berkeley</strain>
    </source>
</reference>
<reference key="2">
    <citation type="journal article" date="2002" name="Genome Biol.">
        <title>Annotation of the Drosophila melanogaster euchromatic genome: a systematic review.</title>
        <authorList>
            <person name="Misra S."/>
            <person name="Crosby M.A."/>
            <person name="Mungall C.J."/>
            <person name="Matthews B.B."/>
            <person name="Campbell K.S."/>
            <person name="Hradecky P."/>
            <person name="Huang Y."/>
            <person name="Kaminker J.S."/>
            <person name="Millburn G.H."/>
            <person name="Prochnik S.E."/>
            <person name="Smith C.D."/>
            <person name="Tupy J.L."/>
            <person name="Whitfield E.J."/>
            <person name="Bayraktaroglu L."/>
            <person name="Berman B.P."/>
            <person name="Bettencourt B.R."/>
            <person name="Celniker S.E."/>
            <person name="de Grey A.D.N.J."/>
            <person name="Drysdale R.A."/>
            <person name="Harris N.L."/>
            <person name="Richter J."/>
            <person name="Russo S."/>
            <person name="Schroeder A.J."/>
            <person name="Shu S.Q."/>
            <person name="Stapleton M."/>
            <person name="Yamada C."/>
            <person name="Ashburner M."/>
            <person name="Gelbart W.M."/>
            <person name="Rubin G.M."/>
            <person name="Lewis S.E."/>
        </authorList>
    </citation>
    <scope>GENOME REANNOTATION</scope>
    <source>
        <strain>Berkeley</strain>
    </source>
</reference>
<reference key="3">
    <citation type="journal article" date="2002" name="Genome Biol.">
        <title>A Drosophila full-length cDNA resource.</title>
        <authorList>
            <person name="Stapleton M."/>
            <person name="Carlson J.W."/>
            <person name="Brokstein P."/>
            <person name="Yu C."/>
            <person name="Champe M."/>
            <person name="George R.A."/>
            <person name="Guarin H."/>
            <person name="Kronmiller B."/>
            <person name="Pacleb J.M."/>
            <person name="Park S."/>
            <person name="Wan K.H."/>
            <person name="Rubin G.M."/>
            <person name="Celniker S.E."/>
        </authorList>
    </citation>
    <scope>NUCLEOTIDE SEQUENCE [LARGE SCALE MRNA]</scope>
    <source>
        <strain>Berkeley</strain>
        <tissue>Embryo</tissue>
    </source>
</reference>
<reference key="4">
    <citation type="journal article" date="2004" name="J. Neurosci.">
        <title>A conserved role but different partners for the transcriptional corepressor CoREST in fly and mammalian nervous system formation.</title>
        <authorList>
            <person name="Dallman J.E."/>
            <person name="Allopenna J."/>
            <person name="Bassett A."/>
            <person name="Travers A."/>
            <person name="Mandel G."/>
        </authorList>
    </citation>
    <scope>FUNCTION</scope>
    <scope>INTERACTION WITH COREST</scope>
</reference>
<reference key="5">
    <citation type="journal article" date="2007" name="Mol. Cell">
        <title>Heterochromatin formation in Drosophila is initiated through active removal of H3K4 methylation by the LSD1 homolog SU(VAR)3-3.</title>
        <authorList>
            <person name="Rudolph T."/>
            <person name="Yonezawa M."/>
            <person name="Lein S."/>
            <person name="Heidrich K."/>
            <person name="Kubicek S."/>
            <person name="Schafer C."/>
            <person name="Phalke S."/>
            <person name="Walther M."/>
            <person name="Schmidt A."/>
            <person name="Jenuwein T."/>
            <person name="Reuter G."/>
        </authorList>
    </citation>
    <scope>FUNCTION</scope>
    <scope>SUBUNIT</scope>
    <scope>SUBCELLULAR LOCATION</scope>
</reference>
<reference key="6">
    <citation type="journal article" date="2008" name="J. Proteome Res.">
        <title>Phosphoproteome analysis of Drosophila melanogaster embryos.</title>
        <authorList>
            <person name="Zhai B."/>
            <person name="Villen J."/>
            <person name="Beausoleil S.A."/>
            <person name="Mintseris J."/>
            <person name="Gygi S.P."/>
        </authorList>
    </citation>
    <scope>PHOSPHORYLATION [LARGE SCALE ANALYSIS] AT SER-24; SER-27 AND SER-866</scope>
    <scope>IDENTIFICATION BY MASS SPECTROMETRY</scope>
    <source>
        <tissue>Embryo</tissue>
    </source>
</reference>
<feature type="chain" id="PRO_0000226785" description="Possible lysine-specific histone demethylase 1">
    <location>
        <begin position="1"/>
        <end position="890"/>
    </location>
</feature>
<feature type="domain" description="SWIRM" evidence="3">
    <location>
        <begin position="160"/>
        <end position="259"/>
    </location>
</feature>
<feature type="region of interest" description="Disordered" evidence="4">
    <location>
        <begin position="1"/>
        <end position="164"/>
    </location>
</feature>
<feature type="region of interest" description="Disordered" evidence="4">
    <location>
        <begin position="860"/>
        <end position="890"/>
    </location>
</feature>
<feature type="compositionally biased region" description="Polar residues" evidence="4">
    <location>
        <begin position="1"/>
        <end position="13"/>
    </location>
</feature>
<feature type="compositionally biased region" description="Polar residues" evidence="4">
    <location>
        <begin position="84"/>
        <end position="109"/>
    </location>
</feature>
<feature type="compositionally biased region" description="Basic and acidic residues" evidence="4">
    <location>
        <begin position="110"/>
        <end position="122"/>
    </location>
</feature>
<feature type="compositionally biased region" description="Low complexity" evidence="4">
    <location>
        <begin position="123"/>
        <end position="138"/>
    </location>
</feature>
<feature type="compositionally biased region" description="Low complexity" evidence="4">
    <location>
        <begin position="861"/>
        <end position="882"/>
    </location>
</feature>
<feature type="binding site" evidence="2">
    <location>
        <begin position="267"/>
        <end position="295"/>
    </location>
    <ligand>
        <name>FAD</name>
        <dbReference type="ChEBI" id="CHEBI:57692"/>
    </ligand>
</feature>
<feature type="modified residue" description="Phosphoserine" evidence="7">
    <location>
        <position position="24"/>
    </location>
</feature>
<feature type="modified residue" description="Phosphoserine" evidence="7">
    <location>
        <position position="27"/>
    </location>
</feature>
<feature type="modified residue" description="Phosphoserine" evidence="7">
    <location>
        <position position="866"/>
    </location>
</feature>
<comment type="function">
    <text evidence="5 6">Probable histone demethylase that specifically demethylates 'Lys-4' of histone H3, a specific tag for epigenetic transcriptional activation, thereby acting as a corepressor. Required for heterochromatic gene silencing. Acts by oxidizing the substrate by FAD to generate the corresponding imine that is subsequently hydrolyzed. Demethylates both mono- and tri-methylated 'Lys-4' of histone H3. May also demethylate 'Lys-9' of histone H3, Plays a role in the repression of neuronal genes.</text>
</comment>
<comment type="cofactor">
    <cofactor evidence="1">
        <name>FAD</name>
        <dbReference type="ChEBI" id="CHEBI:57692"/>
    </cofactor>
</comment>
<comment type="subunit">
    <text evidence="6">Component of a complex that contains at least HDAC1/Rpd3, CoRest and Su(var)3-3/Hdm.</text>
</comment>
<comment type="subcellular location">
    <subcellularLocation>
        <location evidence="6">Nucleus</location>
    </subcellularLocation>
    <subcellularLocation>
        <location evidence="6">Chromosome</location>
    </subcellularLocation>
    <text>In early cleavage, protein displays a uniform nuclear distribution. At metaphase, protein is detected at the chromosome periphery, and between the chromosomes during anaphase. A rather uniform interphase chromatin association is detected until syncytial blastoderm. When cellular blastoderm is formed (cycle 14), protein is preferably associated with pericentric heterochromatin situated at the apical pole of blastoderm nuclei. Later in development, protein is only found over euchromatin. In the germline precursor pole cells, protein remains uniformly distributed within the nucleus.</text>
</comment>
<comment type="similarity">
    <text evidence="8">Belongs to the flavin monoamine oxidase family.</text>
</comment>
<proteinExistence type="evidence at protein level"/>
<organism>
    <name type="scientific">Drosophila melanogaster</name>
    <name type="common">Fruit fly</name>
    <dbReference type="NCBI Taxonomy" id="7227"/>
    <lineage>
        <taxon>Eukaryota</taxon>
        <taxon>Metazoa</taxon>
        <taxon>Ecdysozoa</taxon>
        <taxon>Arthropoda</taxon>
        <taxon>Hexapoda</taxon>
        <taxon>Insecta</taxon>
        <taxon>Pterygota</taxon>
        <taxon>Neoptera</taxon>
        <taxon>Endopterygota</taxon>
        <taxon>Diptera</taxon>
        <taxon>Brachycera</taxon>
        <taxon>Muscomorpha</taxon>
        <taxon>Ephydroidea</taxon>
        <taxon>Drosophilidae</taxon>
        <taxon>Drosophila</taxon>
        <taxon>Sophophora</taxon>
    </lineage>
</organism>